<sequence>MARYLGSKCRLCRREATKLFLKGEKCYSDKCAMERRNYVPGQHGQRRRKVSDYGVHLREKQKVKRSYGLLEAQFRTLYKKAERMKGVTGENLLQLLERRLDNVVYRLGLAASRTEARQIISHKTLLVNGKMVNVPSYLCKPGDVVAVREKSRGQLRIKGALASAMQRGLPSWVEVDAEKLVGTFRSIPERSDLPAEFNENLIVELYSK</sequence>
<organism>
    <name type="scientific">Magnetococcus marinus (strain ATCC BAA-1437 / JCM 17883 / MC-1)</name>
    <dbReference type="NCBI Taxonomy" id="156889"/>
    <lineage>
        <taxon>Bacteria</taxon>
        <taxon>Pseudomonadati</taxon>
        <taxon>Pseudomonadota</taxon>
        <taxon>Alphaproteobacteria</taxon>
        <taxon>Magnetococcales</taxon>
        <taxon>Magnetococcaceae</taxon>
        <taxon>Magnetococcus</taxon>
    </lineage>
</organism>
<keyword id="KW-1185">Reference proteome</keyword>
<keyword id="KW-0687">Ribonucleoprotein</keyword>
<keyword id="KW-0689">Ribosomal protein</keyword>
<keyword id="KW-0694">RNA-binding</keyword>
<keyword id="KW-0699">rRNA-binding</keyword>
<evidence type="ECO:0000255" key="1">
    <source>
        <dbReference type="HAMAP-Rule" id="MF_01306"/>
    </source>
</evidence>
<evidence type="ECO:0000305" key="2"/>
<proteinExistence type="inferred from homology"/>
<feature type="chain" id="PRO_0000293306" description="Small ribosomal subunit protein uS4">
    <location>
        <begin position="1"/>
        <end position="208"/>
    </location>
</feature>
<feature type="domain" description="S4 RNA-binding" evidence="1">
    <location>
        <begin position="98"/>
        <end position="158"/>
    </location>
</feature>
<dbReference type="EMBL" id="CP000471">
    <property type="protein sequence ID" value="ABK43390.1"/>
    <property type="molecule type" value="Genomic_DNA"/>
</dbReference>
<dbReference type="RefSeq" id="WP_011712549.1">
    <property type="nucleotide sequence ID" value="NC_008576.1"/>
</dbReference>
<dbReference type="SMR" id="A0L5Z7"/>
<dbReference type="STRING" id="156889.Mmc1_0871"/>
<dbReference type="KEGG" id="mgm:Mmc1_0871"/>
<dbReference type="eggNOG" id="COG0522">
    <property type="taxonomic scope" value="Bacteria"/>
</dbReference>
<dbReference type="HOGENOM" id="CLU_092403_0_2_5"/>
<dbReference type="OrthoDB" id="9803672at2"/>
<dbReference type="Proteomes" id="UP000002586">
    <property type="component" value="Chromosome"/>
</dbReference>
<dbReference type="GO" id="GO:0015935">
    <property type="term" value="C:small ribosomal subunit"/>
    <property type="evidence" value="ECO:0007669"/>
    <property type="project" value="InterPro"/>
</dbReference>
<dbReference type="GO" id="GO:0019843">
    <property type="term" value="F:rRNA binding"/>
    <property type="evidence" value="ECO:0007669"/>
    <property type="project" value="UniProtKB-UniRule"/>
</dbReference>
<dbReference type="GO" id="GO:0003735">
    <property type="term" value="F:structural constituent of ribosome"/>
    <property type="evidence" value="ECO:0007669"/>
    <property type="project" value="InterPro"/>
</dbReference>
<dbReference type="GO" id="GO:0042274">
    <property type="term" value="P:ribosomal small subunit biogenesis"/>
    <property type="evidence" value="ECO:0007669"/>
    <property type="project" value="TreeGrafter"/>
</dbReference>
<dbReference type="GO" id="GO:0006412">
    <property type="term" value="P:translation"/>
    <property type="evidence" value="ECO:0007669"/>
    <property type="project" value="UniProtKB-UniRule"/>
</dbReference>
<dbReference type="CDD" id="cd00165">
    <property type="entry name" value="S4"/>
    <property type="match status" value="1"/>
</dbReference>
<dbReference type="FunFam" id="1.10.1050.10:FF:000001">
    <property type="entry name" value="30S ribosomal protein S4"/>
    <property type="match status" value="1"/>
</dbReference>
<dbReference type="FunFam" id="3.10.290.10:FF:000001">
    <property type="entry name" value="30S ribosomal protein S4"/>
    <property type="match status" value="1"/>
</dbReference>
<dbReference type="Gene3D" id="1.10.1050.10">
    <property type="entry name" value="Ribosomal Protein S4 Delta 41, Chain A, domain 1"/>
    <property type="match status" value="1"/>
</dbReference>
<dbReference type="Gene3D" id="3.10.290.10">
    <property type="entry name" value="RNA-binding S4 domain"/>
    <property type="match status" value="1"/>
</dbReference>
<dbReference type="HAMAP" id="MF_01306_B">
    <property type="entry name" value="Ribosomal_uS4_B"/>
    <property type="match status" value="1"/>
</dbReference>
<dbReference type="InterPro" id="IPR022801">
    <property type="entry name" value="Ribosomal_uS4"/>
</dbReference>
<dbReference type="InterPro" id="IPR005709">
    <property type="entry name" value="Ribosomal_uS4_bac-type"/>
</dbReference>
<dbReference type="InterPro" id="IPR018079">
    <property type="entry name" value="Ribosomal_uS4_CS"/>
</dbReference>
<dbReference type="InterPro" id="IPR001912">
    <property type="entry name" value="Ribosomal_uS4_N"/>
</dbReference>
<dbReference type="InterPro" id="IPR002942">
    <property type="entry name" value="S4_RNA-bd"/>
</dbReference>
<dbReference type="InterPro" id="IPR036986">
    <property type="entry name" value="S4_RNA-bd_sf"/>
</dbReference>
<dbReference type="NCBIfam" id="NF003717">
    <property type="entry name" value="PRK05327.1"/>
    <property type="match status" value="1"/>
</dbReference>
<dbReference type="NCBIfam" id="TIGR01017">
    <property type="entry name" value="rpsD_bact"/>
    <property type="match status" value="1"/>
</dbReference>
<dbReference type="PANTHER" id="PTHR11831">
    <property type="entry name" value="30S 40S RIBOSOMAL PROTEIN"/>
    <property type="match status" value="1"/>
</dbReference>
<dbReference type="PANTHER" id="PTHR11831:SF4">
    <property type="entry name" value="SMALL RIBOSOMAL SUBUNIT PROTEIN US4M"/>
    <property type="match status" value="1"/>
</dbReference>
<dbReference type="Pfam" id="PF00163">
    <property type="entry name" value="Ribosomal_S4"/>
    <property type="match status" value="1"/>
</dbReference>
<dbReference type="Pfam" id="PF01479">
    <property type="entry name" value="S4"/>
    <property type="match status" value="1"/>
</dbReference>
<dbReference type="SMART" id="SM01390">
    <property type="entry name" value="Ribosomal_S4"/>
    <property type="match status" value="1"/>
</dbReference>
<dbReference type="SMART" id="SM00363">
    <property type="entry name" value="S4"/>
    <property type="match status" value="1"/>
</dbReference>
<dbReference type="SUPFAM" id="SSF55174">
    <property type="entry name" value="Alpha-L RNA-binding motif"/>
    <property type="match status" value="1"/>
</dbReference>
<dbReference type="PROSITE" id="PS00632">
    <property type="entry name" value="RIBOSOMAL_S4"/>
    <property type="match status" value="1"/>
</dbReference>
<dbReference type="PROSITE" id="PS50889">
    <property type="entry name" value="S4"/>
    <property type="match status" value="1"/>
</dbReference>
<name>RS4_MAGMM</name>
<accession>A0L5Z7</accession>
<gene>
    <name evidence="1" type="primary">rpsD</name>
    <name type="ordered locus">Mmc1_0871</name>
</gene>
<protein>
    <recommendedName>
        <fullName evidence="1">Small ribosomal subunit protein uS4</fullName>
    </recommendedName>
    <alternativeName>
        <fullName evidence="2">30S ribosomal protein S4</fullName>
    </alternativeName>
</protein>
<comment type="function">
    <text evidence="1">One of the primary rRNA binding proteins, it binds directly to 16S rRNA where it nucleates assembly of the body of the 30S subunit.</text>
</comment>
<comment type="function">
    <text evidence="1">With S5 and S12 plays an important role in translational accuracy.</text>
</comment>
<comment type="subunit">
    <text evidence="1">Part of the 30S ribosomal subunit. Contacts protein S5. The interaction surface between S4 and S5 is involved in control of translational fidelity.</text>
</comment>
<comment type="similarity">
    <text evidence="1">Belongs to the universal ribosomal protein uS4 family.</text>
</comment>
<reference key="1">
    <citation type="journal article" date="2009" name="Appl. Environ. Microbiol.">
        <title>Complete genome sequence of the chemolithoautotrophic marine magnetotactic coccus strain MC-1.</title>
        <authorList>
            <person name="Schubbe S."/>
            <person name="Williams T.J."/>
            <person name="Xie G."/>
            <person name="Kiss H.E."/>
            <person name="Brettin T.S."/>
            <person name="Martinez D."/>
            <person name="Ross C.A."/>
            <person name="Schuler D."/>
            <person name="Cox B.L."/>
            <person name="Nealson K.H."/>
            <person name="Bazylinski D.A."/>
        </authorList>
    </citation>
    <scope>NUCLEOTIDE SEQUENCE [LARGE SCALE GENOMIC DNA]</scope>
    <source>
        <strain>ATCC BAA-1437 / JCM 17883 / MC-1</strain>
    </source>
</reference>